<organism>
    <name type="scientific">Arabidopsis thaliana</name>
    <name type="common">Mouse-ear cress</name>
    <dbReference type="NCBI Taxonomy" id="3702"/>
    <lineage>
        <taxon>Eukaryota</taxon>
        <taxon>Viridiplantae</taxon>
        <taxon>Streptophyta</taxon>
        <taxon>Embryophyta</taxon>
        <taxon>Tracheophyta</taxon>
        <taxon>Spermatophyta</taxon>
        <taxon>Magnoliopsida</taxon>
        <taxon>eudicotyledons</taxon>
        <taxon>Gunneridae</taxon>
        <taxon>Pentapetalae</taxon>
        <taxon>rosids</taxon>
        <taxon>malvids</taxon>
        <taxon>Brassicales</taxon>
        <taxon>Brassicaceae</taxon>
        <taxon>Camelineae</taxon>
        <taxon>Arabidopsis</taxon>
    </lineage>
</organism>
<dbReference type="EMBL" id="AP000382">
    <property type="protein sequence ID" value="BAB02927.1"/>
    <property type="status" value="ALT_INIT"/>
    <property type="molecule type" value="Genomic_DNA"/>
</dbReference>
<dbReference type="EMBL" id="CP002686">
    <property type="protein sequence ID" value="AEE76884.1"/>
    <property type="molecule type" value="Genomic_DNA"/>
</dbReference>
<dbReference type="EMBL" id="BT025635">
    <property type="protein sequence ID" value="ABF74696.1"/>
    <property type="molecule type" value="mRNA"/>
</dbReference>
<dbReference type="RefSeq" id="NP_189071.1">
    <property type="nucleotide sequence ID" value="NM_113334.3"/>
</dbReference>
<dbReference type="STRING" id="3702.Q1ECS0"/>
<dbReference type="PaxDb" id="3702-AT3G24280.1"/>
<dbReference type="EnsemblPlants" id="AT3G24280.1">
    <property type="protein sequence ID" value="AT3G24280.1"/>
    <property type="gene ID" value="AT3G24280"/>
</dbReference>
<dbReference type="GeneID" id="822016"/>
<dbReference type="Gramene" id="AT3G24280.1">
    <property type="protein sequence ID" value="AT3G24280.1"/>
    <property type="gene ID" value="AT3G24280"/>
</dbReference>
<dbReference type="KEGG" id="ath:AT3G24280"/>
<dbReference type="Araport" id="AT3G24280"/>
<dbReference type="TAIR" id="AT3G24280">
    <property type="gene designation" value="SMAP2"/>
</dbReference>
<dbReference type="HOGENOM" id="CLU_197800_0_0_1"/>
<dbReference type="InParanoid" id="Q1ECS0"/>
<dbReference type="OMA" id="MPMQMEI"/>
<dbReference type="OrthoDB" id="10272775at2759"/>
<dbReference type="PRO" id="PR:Q1ECS0"/>
<dbReference type="Proteomes" id="UP000006548">
    <property type="component" value="Chromosome 3"/>
</dbReference>
<dbReference type="ExpressionAtlas" id="Q1ECS0">
    <property type="expression patterns" value="baseline and differential"/>
</dbReference>
<dbReference type="GO" id="GO:0009734">
    <property type="term" value="P:auxin-activated signaling pathway"/>
    <property type="evidence" value="ECO:0007669"/>
    <property type="project" value="UniProtKB-KW"/>
</dbReference>
<dbReference type="GO" id="GO:0009733">
    <property type="term" value="P:response to auxin"/>
    <property type="evidence" value="ECO:0000315"/>
    <property type="project" value="TAIR"/>
</dbReference>
<reference key="1">
    <citation type="journal article" date="2000" name="DNA Res.">
        <title>Structural analysis of Arabidopsis thaliana chromosome 3. II. Sequence features of the 4,251,695 bp regions covered by 90 P1, TAC and BAC clones.</title>
        <authorList>
            <person name="Kaneko T."/>
            <person name="Katoh T."/>
            <person name="Sato S."/>
            <person name="Nakamura Y."/>
            <person name="Asamizu E."/>
            <person name="Tabata S."/>
        </authorList>
    </citation>
    <scope>NUCLEOTIDE SEQUENCE [LARGE SCALE GENOMIC DNA]</scope>
    <source>
        <strain>cv. Columbia</strain>
    </source>
</reference>
<reference key="2">
    <citation type="journal article" date="2017" name="Plant J.">
        <title>Araport11: a complete reannotation of the Arabidopsis thaliana reference genome.</title>
        <authorList>
            <person name="Cheng C.Y."/>
            <person name="Krishnakumar V."/>
            <person name="Chan A.P."/>
            <person name="Thibaud-Nissen F."/>
            <person name="Schobel S."/>
            <person name="Town C.D."/>
        </authorList>
    </citation>
    <scope>GENOME REANNOTATION</scope>
    <source>
        <strain>cv. Columbia</strain>
    </source>
</reference>
<reference key="3">
    <citation type="submission" date="2006-06" db="EMBL/GenBank/DDBJ databases">
        <title>Arabidopsis ORF clones.</title>
        <authorList>
            <person name="Shinn P."/>
            <person name="Chen H."/>
            <person name="Kim C.J."/>
            <person name="Quinitio C."/>
            <person name="Ecker J.R."/>
        </authorList>
    </citation>
    <scope>NUCLEOTIDE SEQUENCE [LARGE SCALE MRNA]</scope>
</reference>
<reference key="4">
    <citation type="journal article" date="2006" name="Plant J.">
        <title>A small acidic protein 1 (SMAP1) mediates responses of the Arabidopsis root to the synthetic auxin 2,4-dichlorophenoxyacetic acid.</title>
        <authorList>
            <person name="Rahman A."/>
            <person name="Nakasone A."/>
            <person name="Chhun T."/>
            <person name="Ooura C."/>
            <person name="Biswas K.K."/>
            <person name="Uchimiya H."/>
            <person name="Tsurumi S."/>
            <person name="Baskin T.I."/>
            <person name="Tanaka A."/>
            <person name="Oono Y."/>
        </authorList>
    </citation>
    <scope>IDENTIFICATION</scope>
    <source>
        <strain>cv. Columbia</strain>
    </source>
</reference>
<reference key="5">
    <citation type="journal article" date="2009" name="J. Plant Physiol.">
        <title>A gene encoding SMALL ACIDIC PROTEIN 2 potentially mediates the response to synthetic auxin, 2,4-dichlorophenoxyacetic acid, in Arabidopsis thaliana.</title>
        <authorList>
            <person name="Nakasone A."/>
            <person name="Kawai-Yamada M."/>
            <person name="Kiyosue T."/>
            <person name="Narumi I."/>
            <person name="Uchimiya H."/>
            <person name="Oono Y."/>
        </authorList>
    </citation>
    <scope>FUNCTION</scope>
    <scope>TISSUE SPECIFICITY</scope>
    <source>
        <strain>cv. Columbia</strain>
    </source>
</reference>
<keyword id="KW-0927">Auxin signaling pathway</keyword>
<keyword id="KW-1185">Reference proteome</keyword>
<proteinExistence type="evidence at transcript level"/>
<name>SMAP2_ARATH</name>
<accession>Q1ECS0</accession>
<accession>Q9LK17</accession>
<evidence type="ECO:0000269" key="1">
    <source>
    </source>
</evidence>
<evidence type="ECO:0000305" key="2"/>
<gene>
    <name type="primary">SMAP2</name>
    <name type="ordered locus">At3g24280</name>
    <name type="ORF">K7M2.4</name>
</gene>
<sequence>MDRYWEQDPMRPMVYRDFLGEMEYPGYSMPMQMEIDEDDFGPMDMQFEVGGISPFQMKPEDSDFFNKFEDDFDDSDIN</sequence>
<protein>
    <recommendedName>
        <fullName>Small acidic protein 2</fullName>
    </recommendedName>
</protein>
<feature type="chain" id="PRO_0000420768" description="Small acidic protein 2">
    <location>
        <begin position="1"/>
        <end position="78"/>
    </location>
</feature>
<comment type="function">
    <text evidence="1">Mediates responses to the synthetic auxin 2,4-dichlorophenoxyacetic acid (2,4-D). Not involved in the response to indole-3-acetic acid (IAA). May interact with RUB modification-related components and may regulate the culling-ring ubiquitin E3 ligase complex (CRL) activity.</text>
</comment>
<comment type="tissue specificity">
    <text evidence="1">Expressed in siliques and anthers.</text>
</comment>
<comment type="caution">
    <text evidence="2">It is uncertain whether Met-1 or Met-10 is the initiator.</text>
</comment>
<comment type="sequence caution" evidence="2">
    <conflict type="erroneous initiation">
        <sequence resource="EMBL-CDS" id="BAB02927"/>
    </conflict>
    <text>Truncated N-terminus.</text>
</comment>